<protein>
    <recommendedName>
        <fullName evidence="1">Small ribosomal subunit protein uS14</fullName>
    </recommendedName>
    <alternativeName>
        <fullName evidence="2">30S ribosomal protein S14 type Z</fullName>
    </alternativeName>
</protein>
<accession>P47410</accession>
<feature type="chain" id="PRO_0000130906" description="Small ribosomal subunit protein uS14">
    <location>
        <begin position="1"/>
        <end position="61"/>
    </location>
</feature>
<feature type="binding site" evidence="1">
    <location>
        <position position="24"/>
    </location>
    <ligand>
        <name>Zn(2+)</name>
        <dbReference type="ChEBI" id="CHEBI:29105"/>
    </ligand>
</feature>
<feature type="binding site" evidence="1">
    <location>
        <position position="27"/>
    </location>
    <ligand>
        <name>Zn(2+)</name>
        <dbReference type="ChEBI" id="CHEBI:29105"/>
    </ligand>
</feature>
<feature type="binding site" evidence="1">
    <location>
        <position position="40"/>
    </location>
    <ligand>
        <name>Zn(2+)</name>
        <dbReference type="ChEBI" id="CHEBI:29105"/>
    </ligand>
</feature>
<feature type="binding site" evidence="1">
    <location>
        <position position="43"/>
    </location>
    <ligand>
        <name>Zn(2+)</name>
        <dbReference type="ChEBI" id="CHEBI:29105"/>
    </ligand>
</feature>
<gene>
    <name evidence="1" type="primary">rpsZ</name>
    <name evidence="1" type="synonym">rps14</name>
    <name evidence="1" type="synonym">rpsN</name>
    <name type="ordered locus">MG164</name>
</gene>
<reference key="1">
    <citation type="journal article" date="1995" name="Science">
        <title>The minimal gene complement of Mycoplasma genitalium.</title>
        <authorList>
            <person name="Fraser C.M."/>
            <person name="Gocayne J.D."/>
            <person name="White O."/>
            <person name="Adams M.D."/>
            <person name="Clayton R.A."/>
            <person name="Fleischmann R.D."/>
            <person name="Bult C.J."/>
            <person name="Kerlavage A.R."/>
            <person name="Sutton G.G."/>
            <person name="Kelley J.M."/>
            <person name="Fritchman J.L."/>
            <person name="Weidman J.F."/>
            <person name="Small K.V."/>
            <person name="Sandusky M."/>
            <person name="Fuhrmann J.L."/>
            <person name="Nguyen D.T."/>
            <person name="Utterback T.R."/>
            <person name="Saudek D.M."/>
            <person name="Phillips C.A."/>
            <person name="Merrick J.M."/>
            <person name="Tomb J.-F."/>
            <person name="Dougherty B.A."/>
            <person name="Bott K.F."/>
            <person name="Hu P.-C."/>
            <person name="Lucier T.S."/>
            <person name="Peterson S.N."/>
            <person name="Smith H.O."/>
            <person name="Hutchison C.A. III"/>
            <person name="Venter J.C."/>
        </authorList>
    </citation>
    <scope>NUCLEOTIDE SEQUENCE [LARGE SCALE GENOMIC DNA]</scope>
    <source>
        <strain>ATCC 33530 / DSM 19775 / NCTC 10195 / G37</strain>
    </source>
</reference>
<evidence type="ECO:0000255" key="1">
    <source>
        <dbReference type="HAMAP-Rule" id="MF_01364"/>
    </source>
</evidence>
<evidence type="ECO:0000305" key="2"/>
<sequence length="61" mass="6917">MAKKSLKVKQSRPNKFSVRDYTRCLRCGRARAVLSHFGVCRLCFRELAYAGAIPGVKKASW</sequence>
<dbReference type="EMBL" id="L43967">
    <property type="protein sequence ID" value="AAC71382.1"/>
    <property type="molecule type" value="Genomic_DNA"/>
</dbReference>
<dbReference type="PIR" id="B64218">
    <property type="entry name" value="B64218"/>
</dbReference>
<dbReference type="RefSeq" id="WP_009885848.1">
    <property type="nucleotide sequence ID" value="NC_000908.2"/>
</dbReference>
<dbReference type="SMR" id="P47410"/>
<dbReference type="FunCoup" id="P47410">
    <property type="interactions" value="78"/>
</dbReference>
<dbReference type="STRING" id="243273.MG_164"/>
<dbReference type="GeneID" id="88282297"/>
<dbReference type="KEGG" id="mge:MG_164"/>
<dbReference type="eggNOG" id="COG0199">
    <property type="taxonomic scope" value="Bacteria"/>
</dbReference>
<dbReference type="HOGENOM" id="CLU_139869_3_0_14"/>
<dbReference type="InParanoid" id="P47410"/>
<dbReference type="OrthoDB" id="9810484at2"/>
<dbReference type="BioCyc" id="MGEN243273:G1GJ2-188-MONOMER"/>
<dbReference type="Proteomes" id="UP000000807">
    <property type="component" value="Chromosome"/>
</dbReference>
<dbReference type="GO" id="GO:0005737">
    <property type="term" value="C:cytoplasm"/>
    <property type="evidence" value="ECO:0007669"/>
    <property type="project" value="UniProtKB-ARBA"/>
</dbReference>
<dbReference type="GO" id="GO:0015935">
    <property type="term" value="C:small ribosomal subunit"/>
    <property type="evidence" value="ECO:0000318"/>
    <property type="project" value="GO_Central"/>
</dbReference>
<dbReference type="GO" id="GO:0019843">
    <property type="term" value="F:rRNA binding"/>
    <property type="evidence" value="ECO:0007669"/>
    <property type="project" value="UniProtKB-UniRule"/>
</dbReference>
<dbReference type="GO" id="GO:0003735">
    <property type="term" value="F:structural constituent of ribosome"/>
    <property type="evidence" value="ECO:0000318"/>
    <property type="project" value="GO_Central"/>
</dbReference>
<dbReference type="GO" id="GO:0008270">
    <property type="term" value="F:zinc ion binding"/>
    <property type="evidence" value="ECO:0007669"/>
    <property type="project" value="UniProtKB-UniRule"/>
</dbReference>
<dbReference type="GO" id="GO:0006412">
    <property type="term" value="P:translation"/>
    <property type="evidence" value="ECO:0000318"/>
    <property type="project" value="GO_Central"/>
</dbReference>
<dbReference type="FunFam" id="4.10.830.10:FF:000001">
    <property type="entry name" value="30S ribosomal protein S14 type Z"/>
    <property type="match status" value="1"/>
</dbReference>
<dbReference type="Gene3D" id="4.10.830.10">
    <property type="entry name" value="30s Ribosomal Protein S14, Chain N"/>
    <property type="match status" value="1"/>
</dbReference>
<dbReference type="HAMAP" id="MF_01364_B">
    <property type="entry name" value="Ribosomal_uS14_2_B"/>
    <property type="match status" value="1"/>
</dbReference>
<dbReference type="InterPro" id="IPR001209">
    <property type="entry name" value="Ribosomal_uS14"/>
</dbReference>
<dbReference type="InterPro" id="IPR023053">
    <property type="entry name" value="Ribosomal_uS14_bact"/>
</dbReference>
<dbReference type="InterPro" id="IPR018271">
    <property type="entry name" value="Ribosomal_uS14_CS"/>
</dbReference>
<dbReference type="InterPro" id="IPR043140">
    <property type="entry name" value="Ribosomal_uS14_sf"/>
</dbReference>
<dbReference type="NCBIfam" id="NF005974">
    <property type="entry name" value="PRK08061.1"/>
    <property type="match status" value="1"/>
</dbReference>
<dbReference type="PANTHER" id="PTHR19836">
    <property type="entry name" value="30S RIBOSOMAL PROTEIN S14"/>
    <property type="match status" value="1"/>
</dbReference>
<dbReference type="PANTHER" id="PTHR19836:SF19">
    <property type="entry name" value="SMALL RIBOSOMAL SUBUNIT PROTEIN US14M"/>
    <property type="match status" value="1"/>
</dbReference>
<dbReference type="Pfam" id="PF00253">
    <property type="entry name" value="Ribosomal_S14"/>
    <property type="match status" value="1"/>
</dbReference>
<dbReference type="SUPFAM" id="SSF57716">
    <property type="entry name" value="Glucocorticoid receptor-like (DNA-binding domain)"/>
    <property type="match status" value="1"/>
</dbReference>
<dbReference type="PROSITE" id="PS00527">
    <property type="entry name" value="RIBOSOMAL_S14"/>
    <property type="match status" value="1"/>
</dbReference>
<organism>
    <name type="scientific">Mycoplasma genitalium (strain ATCC 33530 / DSM 19775 / NCTC 10195 / G37)</name>
    <name type="common">Mycoplasmoides genitalium</name>
    <dbReference type="NCBI Taxonomy" id="243273"/>
    <lineage>
        <taxon>Bacteria</taxon>
        <taxon>Bacillati</taxon>
        <taxon>Mycoplasmatota</taxon>
        <taxon>Mycoplasmoidales</taxon>
        <taxon>Mycoplasmoidaceae</taxon>
        <taxon>Mycoplasmoides</taxon>
    </lineage>
</organism>
<keyword id="KW-0479">Metal-binding</keyword>
<keyword id="KW-1185">Reference proteome</keyword>
<keyword id="KW-0687">Ribonucleoprotein</keyword>
<keyword id="KW-0689">Ribosomal protein</keyword>
<keyword id="KW-0694">RNA-binding</keyword>
<keyword id="KW-0699">rRNA-binding</keyword>
<keyword id="KW-0862">Zinc</keyword>
<proteinExistence type="inferred from homology"/>
<name>RS14Z_MYCGE</name>
<comment type="function">
    <text evidence="1">Binds 16S rRNA, required for the assembly of 30S particles and may also be responsible for determining the conformation of the 16S rRNA at the A site.</text>
</comment>
<comment type="cofactor">
    <cofactor evidence="1">
        <name>Zn(2+)</name>
        <dbReference type="ChEBI" id="CHEBI:29105"/>
    </cofactor>
    <text evidence="1">Binds 1 zinc ion per subunit.</text>
</comment>
<comment type="subunit">
    <text evidence="1">Part of the 30S ribosomal subunit. Contacts proteins S3 and S10.</text>
</comment>
<comment type="similarity">
    <text evidence="1">Belongs to the universal ribosomal protein uS14 family. Zinc-binding uS14 subfamily.</text>
</comment>